<accession>A0ALV6</accession>
<protein>
    <recommendedName>
        <fullName evidence="1">Large ribosomal subunit protein uL5</fullName>
    </recommendedName>
    <alternativeName>
        <fullName evidence="2">50S ribosomal protein L5</fullName>
    </alternativeName>
</protein>
<reference key="1">
    <citation type="journal article" date="2006" name="J. Bacteriol.">
        <title>Whole-genome sequence of Listeria welshimeri reveals common steps in genome reduction with Listeria innocua as compared to Listeria monocytogenes.</title>
        <authorList>
            <person name="Hain T."/>
            <person name="Steinweg C."/>
            <person name="Kuenne C.T."/>
            <person name="Billion A."/>
            <person name="Ghai R."/>
            <person name="Chatterjee S.S."/>
            <person name="Domann E."/>
            <person name="Kaerst U."/>
            <person name="Goesmann A."/>
            <person name="Bekel T."/>
            <person name="Bartels D."/>
            <person name="Kaiser O."/>
            <person name="Meyer F."/>
            <person name="Puehler A."/>
            <person name="Weisshaar B."/>
            <person name="Wehland J."/>
            <person name="Liang C."/>
            <person name="Dandekar T."/>
            <person name="Lampidis R."/>
            <person name="Kreft J."/>
            <person name="Goebel W."/>
            <person name="Chakraborty T."/>
        </authorList>
    </citation>
    <scope>NUCLEOTIDE SEQUENCE [LARGE SCALE GENOMIC DNA]</scope>
    <source>
        <strain>ATCC 35897 / DSM 20650 / CCUG 15529 / CIP 8149 / NCTC 11857 / SLCC 5334 / V8</strain>
    </source>
</reference>
<dbReference type="EMBL" id="AM263198">
    <property type="protein sequence ID" value="CAK21988.1"/>
    <property type="molecule type" value="Genomic_DNA"/>
</dbReference>
<dbReference type="RefSeq" id="WP_003720938.1">
    <property type="nucleotide sequence ID" value="NC_008555.1"/>
</dbReference>
<dbReference type="SMR" id="A0ALV6"/>
<dbReference type="STRING" id="386043.lwe2570"/>
<dbReference type="GeneID" id="93240501"/>
<dbReference type="KEGG" id="lwe:lwe2570"/>
<dbReference type="eggNOG" id="COG0094">
    <property type="taxonomic scope" value="Bacteria"/>
</dbReference>
<dbReference type="HOGENOM" id="CLU_061015_2_1_9"/>
<dbReference type="OrthoDB" id="9806626at2"/>
<dbReference type="Proteomes" id="UP000000779">
    <property type="component" value="Chromosome"/>
</dbReference>
<dbReference type="GO" id="GO:1990904">
    <property type="term" value="C:ribonucleoprotein complex"/>
    <property type="evidence" value="ECO:0007669"/>
    <property type="project" value="UniProtKB-KW"/>
</dbReference>
<dbReference type="GO" id="GO:0005840">
    <property type="term" value="C:ribosome"/>
    <property type="evidence" value="ECO:0007669"/>
    <property type="project" value="UniProtKB-KW"/>
</dbReference>
<dbReference type="GO" id="GO:0019843">
    <property type="term" value="F:rRNA binding"/>
    <property type="evidence" value="ECO:0007669"/>
    <property type="project" value="UniProtKB-UniRule"/>
</dbReference>
<dbReference type="GO" id="GO:0003735">
    <property type="term" value="F:structural constituent of ribosome"/>
    <property type="evidence" value="ECO:0007669"/>
    <property type="project" value="InterPro"/>
</dbReference>
<dbReference type="GO" id="GO:0000049">
    <property type="term" value="F:tRNA binding"/>
    <property type="evidence" value="ECO:0007669"/>
    <property type="project" value="UniProtKB-UniRule"/>
</dbReference>
<dbReference type="GO" id="GO:0006412">
    <property type="term" value="P:translation"/>
    <property type="evidence" value="ECO:0007669"/>
    <property type="project" value="UniProtKB-UniRule"/>
</dbReference>
<dbReference type="FunFam" id="3.30.1440.10:FF:000001">
    <property type="entry name" value="50S ribosomal protein L5"/>
    <property type="match status" value="1"/>
</dbReference>
<dbReference type="Gene3D" id="3.30.1440.10">
    <property type="match status" value="1"/>
</dbReference>
<dbReference type="HAMAP" id="MF_01333_B">
    <property type="entry name" value="Ribosomal_uL5_B"/>
    <property type="match status" value="1"/>
</dbReference>
<dbReference type="InterPro" id="IPR002132">
    <property type="entry name" value="Ribosomal_uL5"/>
</dbReference>
<dbReference type="InterPro" id="IPR020930">
    <property type="entry name" value="Ribosomal_uL5_bac-type"/>
</dbReference>
<dbReference type="InterPro" id="IPR031309">
    <property type="entry name" value="Ribosomal_uL5_C"/>
</dbReference>
<dbReference type="InterPro" id="IPR020929">
    <property type="entry name" value="Ribosomal_uL5_CS"/>
</dbReference>
<dbReference type="InterPro" id="IPR022803">
    <property type="entry name" value="Ribosomal_uL5_dom_sf"/>
</dbReference>
<dbReference type="InterPro" id="IPR031310">
    <property type="entry name" value="Ribosomal_uL5_N"/>
</dbReference>
<dbReference type="NCBIfam" id="NF000585">
    <property type="entry name" value="PRK00010.1"/>
    <property type="match status" value="1"/>
</dbReference>
<dbReference type="PANTHER" id="PTHR11994">
    <property type="entry name" value="60S RIBOSOMAL PROTEIN L11-RELATED"/>
    <property type="match status" value="1"/>
</dbReference>
<dbReference type="Pfam" id="PF00281">
    <property type="entry name" value="Ribosomal_L5"/>
    <property type="match status" value="1"/>
</dbReference>
<dbReference type="Pfam" id="PF00673">
    <property type="entry name" value="Ribosomal_L5_C"/>
    <property type="match status" value="1"/>
</dbReference>
<dbReference type="PIRSF" id="PIRSF002161">
    <property type="entry name" value="Ribosomal_L5"/>
    <property type="match status" value="1"/>
</dbReference>
<dbReference type="SUPFAM" id="SSF55282">
    <property type="entry name" value="RL5-like"/>
    <property type="match status" value="1"/>
</dbReference>
<dbReference type="PROSITE" id="PS00358">
    <property type="entry name" value="RIBOSOMAL_L5"/>
    <property type="match status" value="1"/>
</dbReference>
<gene>
    <name evidence="1" type="primary">rplE</name>
    <name type="ordered locus">lwe2570</name>
</gene>
<name>RL5_LISW6</name>
<proteinExistence type="inferred from homology"/>
<comment type="function">
    <text evidence="1">This is one of the proteins that bind and probably mediate the attachment of the 5S RNA into the large ribosomal subunit, where it forms part of the central protuberance. In the 70S ribosome it contacts protein S13 of the 30S subunit (bridge B1b), connecting the 2 subunits; this bridge is implicated in subunit movement. Contacts the P site tRNA; the 5S rRNA and some of its associated proteins might help stabilize positioning of ribosome-bound tRNAs.</text>
</comment>
<comment type="subunit">
    <text evidence="1">Part of the 50S ribosomal subunit; part of the 5S rRNA/L5/L18/L25 subcomplex. Contacts the 5S rRNA and the P site tRNA. Forms a bridge to the 30S subunit in the 70S ribosome.</text>
</comment>
<comment type="similarity">
    <text evidence="1">Belongs to the universal ribosomal protein uL5 family.</text>
</comment>
<keyword id="KW-0687">Ribonucleoprotein</keyword>
<keyword id="KW-0689">Ribosomal protein</keyword>
<keyword id="KW-0694">RNA-binding</keyword>
<keyword id="KW-0699">rRNA-binding</keyword>
<keyword id="KW-0820">tRNA-binding</keyword>
<evidence type="ECO:0000255" key="1">
    <source>
        <dbReference type="HAMAP-Rule" id="MF_01333"/>
    </source>
</evidence>
<evidence type="ECO:0000305" key="2"/>
<sequence length="179" mass="19995">MNRLKDQYLKEIVPALMSKFNYDSVMEVPKIDKIVINTGVGDATANAKVLDSAVEELALITGQKPVITKAKNSIAGFRLREGMPIGAKVTLRGERMYDFLDKLVTVSLPRVRDFRGVSKKAFDGRGNYTLGVREQLIFPEIDYDQVSKVRGMDVVIVTTAKSDEESHELLTQLGMPFQK</sequence>
<organism>
    <name type="scientific">Listeria welshimeri serovar 6b (strain ATCC 35897 / DSM 20650 / CCUG 15529 / CIP 8149 / NCTC 11857 / SLCC 5334 / V8)</name>
    <dbReference type="NCBI Taxonomy" id="386043"/>
    <lineage>
        <taxon>Bacteria</taxon>
        <taxon>Bacillati</taxon>
        <taxon>Bacillota</taxon>
        <taxon>Bacilli</taxon>
        <taxon>Bacillales</taxon>
        <taxon>Listeriaceae</taxon>
        <taxon>Listeria</taxon>
    </lineage>
</organism>
<feature type="chain" id="PRO_1000052764" description="Large ribosomal subunit protein uL5">
    <location>
        <begin position="1"/>
        <end position="179"/>
    </location>
</feature>